<reference key="1">
    <citation type="journal article" date="2004" name="Proc. Natl. Acad. Sci. U.S.A.">
        <title>Complete genomes of two clinical Staphylococcus aureus strains: evidence for the rapid evolution of virulence and drug resistance.</title>
        <authorList>
            <person name="Holden M.T.G."/>
            <person name="Feil E.J."/>
            <person name="Lindsay J.A."/>
            <person name="Peacock S.J."/>
            <person name="Day N.P.J."/>
            <person name="Enright M.C."/>
            <person name="Foster T.J."/>
            <person name="Moore C.E."/>
            <person name="Hurst L."/>
            <person name="Atkin R."/>
            <person name="Barron A."/>
            <person name="Bason N."/>
            <person name="Bentley S.D."/>
            <person name="Chillingworth C."/>
            <person name="Chillingworth T."/>
            <person name="Churcher C."/>
            <person name="Clark L."/>
            <person name="Corton C."/>
            <person name="Cronin A."/>
            <person name="Doggett J."/>
            <person name="Dowd L."/>
            <person name="Feltwell T."/>
            <person name="Hance Z."/>
            <person name="Harris B."/>
            <person name="Hauser H."/>
            <person name="Holroyd S."/>
            <person name="Jagels K."/>
            <person name="James K.D."/>
            <person name="Lennard N."/>
            <person name="Line A."/>
            <person name="Mayes R."/>
            <person name="Moule S."/>
            <person name="Mungall K."/>
            <person name="Ormond D."/>
            <person name="Quail M.A."/>
            <person name="Rabbinowitsch E."/>
            <person name="Rutherford K.M."/>
            <person name="Sanders M."/>
            <person name="Sharp S."/>
            <person name="Simmonds M."/>
            <person name="Stevens K."/>
            <person name="Whitehead S."/>
            <person name="Barrell B.G."/>
            <person name="Spratt B.G."/>
            <person name="Parkhill J."/>
        </authorList>
    </citation>
    <scope>NUCLEOTIDE SEQUENCE [LARGE SCALE GENOMIC DNA]</scope>
    <source>
        <strain>MSSA476</strain>
    </source>
</reference>
<comment type="function">
    <text evidence="1">Plays a role in the inhibition of both the innate and adaptive immune responses. Possesses two N-terminal domains that bind the Fc region of IgG and two domains that form a tripartite complex with complement factors C3b and CFH. By recruiting CFH and C3b, the secreted form acts as a potent complement inhibitor of the alternative pathway-mediated lysis.</text>
</comment>
<comment type="subunit">
    <text evidence="1 2">Interacts (via sbi-I and sbi-II domains) with the Fc region of mammalian immunoglobulin G (IgG) proteins. Interacts (via sbi-III and sbi-IV domains) with host complement C3. Interacts (via sbi-III and sbi-IV domains) with host CFH (By similarity). Interacts (via sbi-IV domain) with beta-2-glycoprotein 1/APOH (By similarity).</text>
</comment>
<comment type="subcellular location">
    <subcellularLocation>
        <location evidence="1">Secreted</location>
    </subcellularLocation>
    <subcellularLocation>
        <location evidence="1">Cell membrane</location>
    </subcellularLocation>
    <text evidence="1">Occurs both extracellularly and associated with the cytoplasmic membrane where only the domains I and II are exposed to the extracellular media. Membrane association occurs via binding to lipoteichoic acid.</text>
</comment>
<comment type="domain">
    <text evidence="1">Sbi-I and sbi-II domains provide protection only when anchored to the cell surface, whereas only the secreted sbi-III and sbi-IV domains are biologically active.</text>
</comment>
<comment type="similarity">
    <text evidence="5">Belongs to the immunoglobulin-binding protein Sbi family.</text>
</comment>
<name>SBI_STAAS</name>
<feature type="signal peptide" evidence="3">
    <location>
        <begin position="1"/>
        <end position="29"/>
    </location>
</feature>
<feature type="chain" id="PRO_0000361889" description="Immunoglobulin-binding protein Sbi">
    <location>
        <begin position="30"/>
        <end position="437"/>
    </location>
</feature>
<feature type="repeat" description="B 1">
    <location>
        <begin position="43"/>
        <end position="94"/>
    </location>
</feature>
<feature type="repeat" description="B 2">
    <location>
        <begin position="95"/>
        <end position="148"/>
    </location>
</feature>
<feature type="repeat" description="2-1">
    <location>
        <begin position="267"/>
        <end position="271"/>
    </location>
</feature>
<feature type="repeat" description="2-2">
    <location>
        <begin position="272"/>
        <end position="276"/>
    </location>
</feature>
<feature type="repeat" description="2-3">
    <location>
        <begin position="277"/>
        <end position="281"/>
    </location>
</feature>
<feature type="repeat" description="2-4">
    <location>
        <begin position="282"/>
        <end position="286"/>
    </location>
</feature>
<feature type="repeat" description="2-5">
    <location>
        <begin position="287"/>
        <end position="291"/>
    </location>
</feature>
<feature type="repeat" description="2-6">
    <location>
        <begin position="292"/>
        <end position="296"/>
    </location>
</feature>
<feature type="repeat" description="2-7">
    <location>
        <begin position="297"/>
        <end position="301"/>
    </location>
</feature>
<feature type="repeat" description="2-8">
    <location>
        <begin position="302"/>
        <end position="306"/>
    </location>
</feature>
<feature type="region of interest" description="Sbi-I">
    <location>
        <begin position="42"/>
        <end position="94"/>
    </location>
</feature>
<feature type="region of interest" description="Sbi-II">
    <location>
        <begin position="103"/>
        <end position="153"/>
    </location>
</feature>
<feature type="region of interest" description="Sbi-III">
    <location>
        <begin position="154"/>
        <end position="195"/>
    </location>
</feature>
<feature type="region of interest" description="Sbi-IV">
    <location>
        <begin position="196"/>
        <end position="253"/>
    </location>
</feature>
<feature type="region of interest" description="8 X 5 AA tandem repeat of P-[KQ]-[AISV]-[EKQ]-[AKLSV]">
    <location>
        <begin position="267"/>
        <end position="306"/>
    </location>
</feature>
<feature type="region of interest" description="Disordered" evidence="4">
    <location>
        <begin position="267"/>
        <end position="295"/>
    </location>
</feature>
<gene>
    <name type="primary">sbi</name>
    <name type="ordered locus">SAS2309</name>
</gene>
<sequence length="437" mass="50129">MKNKYISKLLVGAATITLATMISNGEAKASENTQQTSTKHQTTQNNYVTDQQKAFYQVLHLKGITEEQRNQYIKTLREHPERAQEVFSESLKDSKNPDRRVAQQNAFYNVLKNDNLTEQEKNNYIAQIKENPDRSQQVWVESVQSSKAKERQNIENADKAIKDFQDNKAPHDKSAAYEANSKLPKDLRDKNNRFVEKVSIEKAIVRHDERVKSANDAISKLNVKDSIENRRLAQREVNKAPMDVKEHLQKQLDALVAQKDAEKKVAPKVEAPQIQSPQIEKPKAESPKVEVPQIQSPKVEVPQSKLLGYYQSLKDSFNYGYKYLTDTYKSYKEKYDTAKYYYNTYYKYKGAIDKAVLTLLGDGSKSYIQPLKVDDKNGYLAKSYAQVRNYVTESINTGKVLYTFYQNPTLVKTAIKAQETASSIKNTITGLFNSFWK</sequence>
<proteinExistence type="inferred from homology"/>
<dbReference type="EMBL" id="BX571857">
    <property type="protein sequence ID" value="CAG44122.1"/>
    <property type="molecule type" value="Genomic_DNA"/>
</dbReference>
<dbReference type="RefSeq" id="WP_000792571.1">
    <property type="nucleotide sequence ID" value="NC_002953.3"/>
</dbReference>
<dbReference type="SMR" id="Q6G6Q3"/>
<dbReference type="KEGG" id="sas:SAS2309"/>
<dbReference type="HOGENOM" id="CLU_051343_0_0_9"/>
<dbReference type="PRO" id="PR:Q6G6Q3"/>
<dbReference type="GO" id="GO:0005576">
    <property type="term" value="C:extracellular region"/>
    <property type="evidence" value="ECO:0007669"/>
    <property type="project" value="UniProtKB-SubCell"/>
</dbReference>
<dbReference type="GO" id="GO:0005886">
    <property type="term" value="C:plasma membrane"/>
    <property type="evidence" value="ECO:0007669"/>
    <property type="project" value="UniProtKB-SubCell"/>
</dbReference>
<dbReference type="GO" id="GO:0019864">
    <property type="term" value="F:IgG binding"/>
    <property type="evidence" value="ECO:0007669"/>
    <property type="project" value="UniProtKB-KW"/>
</dbReference>
<dbReference type="Gene3D" id="1.20.5.420">
    <property type="entry name" value="Immunoglobulin FC, subunit C"/>
    <property type="match status" value="2"/>
</dbReference>
<dbReference type="Gene3D" id="1.10.10.1270">
    <property type="entry name" value="Sbi, C3 binding domain IV"/>
    <property type="match status" value="1"/>
</dbReference>
<dbReference type="InterPro" id="IPR009063">
    <property type="entry name" value="Ig/albumin-bd_sf"/>
</dbReference>
<dbReference type="InterPro" id="IPR021657">
    <property type="entry name" value="IgG-binding_Sbi_dom_IV"/>
</dbReference>
<dbReference type="InterPro" id="IPR003132">
    <property type="entry name" value="Protein_A_Ig-bd"/>
</dbReference>
<dbReference type="InterPro" id="IPR041909">
    <property type="entry name" value="Sbi_C3_db_domIV"/>
</dbReference>
<dbReference type="Pfam" id="PF02216">
    <property type="entry name" value="B"/>
    <property type="match status" value="2"/>
</dbReference>
<dbReference type="Pfam" id="PF11621">
    <property type="entry name" value="Sbi-IV"/>
    <property type="match status" value="1"/>
</dbReference>
<dbReference type="SUPFAM" id="SSF46997">
    <property type="entry name" value="Bacterial immunoglobulin/albumin-binding domains"/>
    <property type="match status" value="2"/>
</dbReference>
<protein>
    <recommendedName>
        <fullName>Immunoglobulin-binding protein Sbi</fullName>
    </recommendedName>
</protein>
<accession>Q6G6Q3</accession>
<organism>
    <name type="scientific">Staphylococcus aureus (strain MSSA476)</name>
    <dbReference type="NCBI Taxonomy" id="282459"/>
    <lineage>
        <taxon>Bacteria</taxon>
        <taxon>Bacillati</taxon>
        <taxon>Bacillota</taxon>
        <taxon>Bacilli</taxon>
        <taxon>Bacillales</taxon>
        <taxon>Staphylococcaceae</taxon>
        <taxon>Staphylococcus</taxon>
    </lineage>
</organism>
<evidence type="ECO:0000250" key="1">
    <source>
        <dbReference type="UniProtKB" id="A6QJQ7"/>
    </source>
</evidence>
<evidence type="ECO:0000250" key="2">
    <source>
        <dbReference type="UniProtKB" id="Q931F4"/>
    </source>
</evidence>
<evidence type="ECO:0000255" key="3"/>
<evidence type="ECO:0000256" key="4">
    <source>
        <dbReference type="SAM" id="MobiDB-lite"/>
    </source>
</evidence>
<evidence type="ECO:0000305" key="5"/>
<keyword id="KW-1003">Cell membrane</keyword>
<keyword id="KW-0390">IgG-binding protein</keyword>
<keyword id="KW-0472">Membrane</keyword>
<keyword id="KW-0677">Repeat</keyword>
<keyword id="KW-0964">Secreted</keyword>
<keyword id="KW-0732">Signal</keyword>
<keyword id="KW-0843">Virulence</keyword>